<keyword id="KW-0413">Isomerase</keyword>
<keyword id="KW-0663">Pyridoxal phosphate</keyword>
<comment type="function">
    <text evidence="1">Catalyzes the interconversion of L-alanine and D-alanine. May also act on other amino acids.</text>
</comment>
<comment type="catalytic activity">
    <reaction evidence="1">
        <text>L-alanine = D-alanine</text>
        <dbReference type="Rhea" id="RHEA:20249"/>
        <dbReference type="ChEBI" id="CHEBI:57416"/>
        <dbReference type="ChEBI" id="CHEBI:57972"/>
        <dbReference type="EC" id="5.1.1.1"/>
    </reaction>
</comment>
<comment type="cofactor">
    <cofactor evidence="1">
        <name>pyridoxal 5'-phosphate</name>
        <dbReference type="ChEBI" id="CHEBI:597326"/>
    </cofactor>
</comment>
<comment type="pathway">
    <text evidence="1">Amino-acid biosynthesis; D-alanine biosynthesis; D-alanine from L-alanine: step 1/1.</text>
</comment>
<comment type="similarity">
    <text evidence="1">Belongs to the alanine racemase family.</text>
</comment>
<protein>
    <recommendedName>
        <fullName evidence="1">Alanine racemase</fullName>
        <ecNumber evidence="1">5.1.1.1</ecNumber>
    </recommendedName>
</protein>
<sequence length="358" mass="38990">MKAATACIDLVALQHNLQLIKQQAPHSKLMAVVKANGYGHGLRHVAKHAVGADAFGVARIEEALQLRACGVVKPILLLEGFYSSGDLPVLVTNNIQTVVHCEEQLRDLENAELETPVVVWLKIDSGMHRLGVRPEQYQAFVERLHQCPNVAKPLRYMSHFGCADEMNNEMTPKQIELFLSLTRGCKGERSLAASAGLLAWQESQLEWVRPGIIMYGVSPFGDKTASELGYKPVMTLKSHLIAVRDVKAGESVGYGATWISERDTKVGVIAIGYGDGYPRTAPNGTPVLVNGRKVPIAGRVSMDMLTVDLGPDATDHVGDEAILWGADLPAEDVAQHIGTIAYELVTKLTSRVEMSYSE</sequence>
<organism>
    <name type="scientific">Vibrio vulnificus (strain CMCP6)</name>
    <dbReference type="NCBI Taxonomy" id="216895"/>
    <lineage>
        <taxon>Bacteria</taxon>
        <taxon>Pseudomonadati</taxon>
        <taxon>Pseudomonadota</taxon>
        <taxon>Gammaproteobacteria</taxon>
        <taxon>Vibrionales</taxon>
        <taxon>Vibrionaceae</taxon>
        <taxon>Vibrio</taxon>
    </lineage>
</organism>
<proteinExistence type="inferred from homology"/>
<feature type="chain" id="PRO_0000114595" description="Alanine racemase">
    <location>
        <begin position="1"/>
        <end position="358"/>
    </location>
</feature>
<feature type="active site" description="Proton acceptor; specific for D-alanine" evidence="1">
    <location>
        <position position="34"/>
    </location>
</feature>
<feature type="active site" description="Proton acceptor; specific for L-alanine" evidence="1">
    <location>
        <position position="254"/>
    </location>
</feature>
<feature type="binding site" evidence="1">
    <location>
        <position position="129"/>
    </location>
    <ligand>
        <name>substrate</name>
    </ligand>
</feature>
<feature type="binding site" evidence="1">
    <location>
        <position position="302"/>
    </location>
    <ligand>
        <name>substrate</name>
    </ligand>
</feature>
<feature type="modified residue" description="N6-(pyridoxal phosphate)lysine" evidence="1">
    <location>
        <position position="34"/>
    </location>
</feature>
<gene>
    <name type="primary">alr</name>
    <name type="ordered locus">VV1_1393</name>
</gene>
<dbReference type="EC" id="5.1.1.1" evidence="1"/>
<dbReference type="EMBL" id="AE016795">
    <property type="protein sequence ID" value="AAO09842.2"/>
    <property type="molecule type" value="Genomic_DNA"/>
</dbReference>
<dbReference type="SMR" id="Q8DCL0"/>
<dbReference type="KEGG" id="vvu:VV1_1393"/>
<dbReference type="HOGENOM" id="CLU_028393_1_0_6"/>
<dbReference type="UniPathway" id="UPA00042">
    <property type="reaction ID" value="UER00497"/>
</dbReference>
<dbReference type="Proteomes" id="UP000002275">
    <property type="component" value="Chromosome 1"/>
</dbReference>
<dbReference type="GO" id="GO:0005829">
    <property type="term" value="C:cytosol"/>
    <property type="evidence" value="ECO:0007669"/>
    <property type="project" value="TreeGrafter"/>
</dbReference>
<dbReference type="GO" id="GO:0008784">
    <property type="term" value="F:alanine racemase activity"/>
    <property type="evidence" value="ECO:0007669"/>
    <property type="project" value="UniProtKB-UniRule"/>
</dbReference>
<dbReference type="GO" id="GO:0030170">
    <property type="term" value="F:pyridoxal phosphate binding"/>
    <property type="evidence" value="ECO:0007669"/>
    <property type="project" value="UniProtKB-UniRule"/>
</dbReference>
<dbReference type="GO" id="GO:0030632">
    <property type="term" value="P:D-alanine biosynthetic process"/>
    <property type="evidence" value="ECO:0007669"/>
    <property type="project" value="UniProtKB-UniRule"/>
</dbReference>
<dbReference type="CDD" id="cd06827">
    <property type="entry name" value="PLPDE_III_AR_proteobact"/>
    <property type="match status" value="1"/>
</dbReference>
<dbReference type="FunFam" id="2.40.37.10:FF:000002">
    <property type="entry name" value="Alanine racemase"/>
    <property type="match status" value="1"/>
</dbReference>
<dbReference type="FunFam" id="3.20.20.10:FF:000002">
    <property type="entry name" value="Alanine racemase"/>
    <property type="match status" value="1"/>
</dbReference>
<dbReference type="Gene3D" id="3.20.20.10">
    <property type="entry name" value="Alanine racemase"/>
    <property type="match status" value="1"/>
</dbReference>
<dbReference type="Gene3D" id="2.40.37.10">
    <property type="entry name" value="Lyase, Ornithine Decarboxylase, Chain A, domain 1"/>
    <property type="match status" value="1"/>
</dbReference>
<dbReference type="HAMAP" id="MF_01201">
    <property type="entry name" value="Ala_racemase"/>
    <property type="match status" value="1"/>
</dbReference>
<dbReference type="InterPro" id="IPR000821">
    <property type="entry name" value="Ala_racemase"/>
</dbReference>
<dbReference type="InterPro" id="IPR009006">
    <property type="entry name" value="Ala_racemase/Decarboxylase_C"/>
</dbReference>
<dbReference type="InterPro" id="IPR011079">
    <property type="entry name" value="Ala_racemase_C"/>
</dbReference>
<dbReference type="InterPro" id="IPR001608">
    <property type="entry name" value="Ala_racemase_N"/>
</dbReference>
<dbReference type="InterPro" id="IPR020622">
    <property type="entry name" value="Ala_racemase_pyridoxalP-BS"/>
</dbReference>
<dbReference type="InterPro" id="IPR029066">
    <property type="entry name" value="PLP-binding_barrel"/>
</dbReference>
<dbReference type="NCBIfam" id="TIGR00492">
    <property type="entry name" value="alr"/>
    <property type="match status" value="1"/>
</dbReference>
<dbReference type="PANTHER" id="PTHR30511">
    <property type="entry name" value="ALANINE RACEMASE"/>
    <property type="match status" value="1"/>
</dbReference>
<dbReference type="PANTHER" id="PTHR30511:SF4">
    <property type="entry name" value="ALANINE RACEMASE, BIOSYNTHETIC"/>
    <property type="match status" value="1"/>
</dbReference>
<dbReference type="Pfam" id="PF00842">
    <property type="entry name" value="Ala_racemase_C"/>
    <property type="match status" value="1"/>
</dbReference>
<dbReference type="Pfam" id="PF01168">
    <property type="entry name" value="Ala_racemase_N"/>
    <property type="match status" value="1"/>
</dbReference>
<dbReference type="PRINTS" id="PR00992">
    <property type="entry name" value="ALARACEMASE"/>
</dbReference>
<dbReference type="SMART" id="SM01005">
    <property type="entry name" value="Ala_racemase_C"/>
    <property type="match status" value="1"/>
</dbReference>
<dbReference type="SUPFAM" id="SSF50621">
    <property type="entry name" value="Alanine racemase C-terminal domain-like"/>
    <property type="match status" value="1"/>
</dbReference>
<dbReference type="SUPFAM" id="SSF51419">
    <property type="entry name" value="PLP-binding barrel"/>
    <property type="match status" value="1"/>
</dbReference>
<dbReference type="PROSITE" id="PS00395">
    <property type="entry name" value="ALANINE_RACEMASE"/>
    <property type="match status" value="1"/>
</dbReference>
<reference key="1">
    <citation type="submission" date="2002-12" db="EMBL/GenBank/DDBJ databases">
        <title>Complete genome sequence of Vibrio vulnificus CMCP6.</title>
        <authorList>
            <person name="Rhee J.H."/>
            <person name="Kim S.Y."/>
            <person name="Chung S.S."/>
            <person name="Kim J.J."/>
            <person name="Moon Y.H."/>
            <person name="Jeong H."/>
            <person name="Choy H.E."/>
        </authorList>
    </citation>
    <scope>NUCLEOTIDE SEQUENCE [LARGE SCALE GENOMIC DNA]</scope>
    <source>
        <strain>CMCP6</strain>
    </source>
</reference>
<accession>Q8DCL0</accession>
<evidence type="ECO:0000255" key="1">
    <source>
        <dbReference type="HAMAP-Rule" id="MF_01201"/>
    </source>
</evidence>
<name>ALR_VIBVU</name>